<reference key="1">
    <citation type="journal article" date="1991" name="Virology">
        <title>Nucleotide sequence and transcriptional mapping of the major capsid protein gene of pseudorabies virus.</title>
        <authorList>
            <person name="Yamada S."/>
            <person name="Imada T."/>
            <person name="Watanabe W."/>
            <person name="Honda Y."/>
            <person name="Nakajima-Iijima S."/>
            <person name="Shimizu Y."/>
            <person name="Sekikawa K."/>
        </authorList>
    </citation>
    <scope>NUCLEOTIDE SEQUENCE [GENOMIC DNA]</scope>
</reference>
<evidence type="ECO:0000255" key="1">
    <source>
        <dbReference type="HAMAP-Rule" id="MF_04016"/>
    </source>
</evidence>
<protein>
    <recommendedName>
        <fullName evidence="1">Major capsid protein</fullName>
        <shortName evidence="1">MCP</shortName>
    </recommendedName>
</protein>
<proteinExistence type="inferred from homology"/>
<accession>Q00705</accession>
<organismHost>
    <name type="scientific">Sus scrofa</name>
    <name type="common">Pig</name>
    <dbReference type="NCBI Taxonomy" id="9823"/>
</organismHost>
<sequence>MERPAILPSGQILSNIEVHSHRALFDIFKRFRSDDNNLYGAEFDALLGTYCSTLSLVRFLELGLSVACVCTKFPELSYVAEGTIQFEVQQPMIARDGPHPADQPVHNYMIKRLDRRSLNAAFSIAVEALGLISGENLDGTHISSAMRLRAIQQLARNVQAVLDSFERGTADQMLRVLMEKAPPLSLLAPFTLYEGRLADRVACAALVSELKRRVRDDTFFLTKHERNKDAVLDRLSDLVNCTAPSVAVARMTHADTQGRPVDGVLVTTAGVRQRLLHHVLTLADTHADVPVTYGEMVIANTNLVTALVMGKAVSNMDDVARYLLGGEPAPDDGKPVGSARVRADLVVVGDRLVFLEALEKRVYQATQVPYPLVGNLDVTFVMPLGVFKPAADRYARHAGSFAPTPGLPDPRTHPPRAVHFFNKDGVPCHVTFEHAMGTLCHPSFLDVDATLAALRQEPAEVQCAFGAYVADARPDALVGLMQRFLEEWPGMMPVRPRWAAPAAADQLLAPGNADLRLELHPAFDFFVAPEVDVPGPFAVPQVMGQVRAMPRIINGNIPLALCPVDFRDARGFELSVDRHRLAPATVAAVRGAFRDANYPMVFYIIEAVIHGSERTFCALARLVAQCIQSYWRNTHNAAFVNNFYMVMYINTYLGNGELPEDCAAVYKDLLEHVHALRRLIGEFTLPGDPLGNQPQEELNHALADATLLPPLIWDCDPILYRDGLAERLPELRVNGAHFQHILWVEMAQVNFRNVGGGLVHNRPVRNENQPLHPHHDAEWSVLSKIYYYAVVPAFSRGNCCTMGVRYDRVYQLVQTMVVPETDEEVGTDDPRHPLHPRNLVPNSLNVLFHNACVAVDADAMLILQETVTNMAERTTPLLASVAPDAGMATVATRDMRTHDGSLHHGLLMMAYQPNDATLLEGAFFYPAPVNALFACADHLGAMRDVGAEVRAAAQHVPCVPHFLGANYYATVRQPVAQHAAQSRADENTLSYALMAGYFKMSPVAFTHQLRRQLHPGFALTVVRQDRFATENVLFAEKASESYFMGQMQVARTESGGGLHLQLTQPRANVDLGVGFTAAYAAAALRAPVTDMGNLPQNLFATRGAPPMLDADADDYLRRTVNAGNRLAPVPVFGQMLPQVPAGLARGQQSVCEFIATPVSVDLAYFRRACNPRGRAAGEVHGEEGLMFDHSHADPAHPHRATANPWASQRHSYADRLYNGQYNMSGPAYSPCFKFFTPAEAVAKSRGLARLIADTGAAASPTSNGEYQFKRPVGAGELVEDPCALFQEAYPPLCASDSALLRTPLGAEEHFAQYLIRDESPLKGCFQHASA</sequence>
<dbReference type="PIR" id="A40777">
    <property type="entry name" value="VCBES5"/>
</dbReference>
<dbReference type="SMR" id="Q00705"/>
<dbReference type="DIP" id="DIP-62100N"/>
<dbReference type="GO" id="GO:0042025">
    <property type="term" value="C:host cell nucleus"/>
    <property type="evidence" value="ECO:0007669"/>
    <property type="project" value="UniProtKB-SubCell"/>
</dbReference>
<dbReference type="GO" id="GO:0039622">
    <property type="term" value="C:T=16 icosahedral viral capsid"/>
    <property type="evidence" value="ECO:0007669"/>
    <property type="project" value="UniProtKB-KW"/>
</dbReference>
<dbReference type="GO" id="GO:0005198">
    <property type="term" value="F:structural molecule activity"/>
    <property type="evidence" value="ECO:0007669"/>
    <property type="project" value="InterPro"/>
</dbReference>
<dbReference type="HAMAP" id="MF_04016">
    <property type="entry name" value="HSV_MCP"/>
    <property type="match status" value="1"/>
</dbReference>
<dbReference type="InterPro" id="IPR000912">
    <property type="entry name" value="Herpes_MCP"/>
</dbReference>
<dbReference type="InterPro" id="IPR023233">
    <property type="entry name" value="Herpes_MCP_upper_sf"/>
</dbReference>
<dbReference type="Pfam" id="PF03122">
    <property type="entry name" value="Herpes_MCP"/>
    <property type="match status" value="1"/>
</dbReference>
<dbReference type="PRINTS" id="PR00235">
    <property type="entry name" value="HSVCAPSIDMCP"/>
</dbReference>
<dbReference type="SUPFAM" id="SSF103417">
    <property type="entry name" value="Major capsid protein VP5"/>
    <property type="match status" value="1"/>
</dbReference>
<feature type="chain" id="PRO_0000115708" description="Major capsid protein">
    <location>
        <begin position="1"/>
        <end position="1330"/>
    </location>
</feature>
<organism>
    <name type="scientific">Suid herpesvirus 1 (strain Indiana S)</name>
    <name type="common">SuHV-1</name>
    <name type="synonym">Pseudorabies virus (strain Indiana S)</name>
    <dbReference type="NCBI Taxonomy" id="31522"/>
    <lineage>
        <taxon>Viruses</taxon>
        <taxon>Duplodnaviria</taxon>
        <taxon>Heunggongvirae</taxon>
        <taxon>Peploviricota</taxon>
        <taxon>Herviviricetes</taxon>
        <taxon>Herpesvirales</taxon>
        <taxon>Orthoherpesviridae</taxon>
        <taxon>Alphaherpesvirinae</taxon>
        <taxon>Varicellovirus</taxon>
        <taxon>Varicellovirus suidalpha1</taxon>
        <taxon>Suid herpesvirus 1</taxon>
    </lineage>
</organism>
<name>MCP_SUHVS</name>
<gene>
    <name evidence="1" type="primary">MCP</name>
</gene>
<comment type="function">
    <text evidence="1">Self-assembles to form an icosahedral capsid with a T=16 symmetry, about 200 nm in diameter, and consisting of 150 hexons and 12 pentons (total of 162 capsomers). Hexons form the edges and faces of the capsid and are each composed of six MCP molecules. In contrast, one penton is found at each of the 12 vertices. Eleven of the pentons are MCP pentamers, while the last vertex is occupied by the portal complex. The capsid is surrounded by a layer of proteinaceous material designated the tegument which, in turn, is enclosed in an envelope of host cell-derived lipids containing virus-encoded glycoproteins.</text>
</comment>
<comment type="subunit">
    <text evidence="1">Homomultimer. Makes the hexons and eleven out of twelve pentons. Interacts with triplex proteins 1/TRX1 and 2/TRX2; adjacent capsomers are linked together in groups of three by triplexes, heterotrimeric complexes composed of one molecule of TRX1 and two molecules of TRX2. Interacts with scaffold protein; this interaction allows efficient MCP transport to the host nucleus. Interacts with capsid vertex component 2/CVC2. Interacts with the small capsomere-interacting protein/SCP.</text>
</comment>
<comment type="subcellular location">
    <subcellularLocation>
        <location evidence="1">Virion</location>
    </subcellularLocation>
    <subcellularLocation>
        <location evidence="1">Host nucleus</location>
    </subcellularLocation>
</comment>
<comment type="similarity">
    <text evidence="1">Belongs to the herpesviridae major capsid protein family.</text>
</comment>
<keyword id="KW-0167">Capsid protein</keyword>
<keyword id="KW-1048">Host nucleus</keyword>
<keyword id="KW-1147">T=16 icosahedral capsid protein</keyword>
<keyword id="KW-0946">Virion</keyword>